<keyword id="KW-0472">Membrane</keyword>
<keyword id="KW-0602">Photosynthesis</keyword>
<keyword id="KW-0604">Photosystem II</keyword>
<keyword id="KW-0674">Reaction center</keyword>
<keyword id="KW-0793">Thylakoid</keyword>
<keyword id="KW-0812">Transmembrane</keyword>
<keyword id="KW-1133">Transmembrane helix</keyword>
<comment type="function">
    <text evidence="1">One of the components of the core complex of photosystem II (PSII). PSII is a light-driven water:plastoquinone oxidoreductase that uses light energy to abstract electrons from H(2)O, generating O(2) and a proton gradient subsequently used for ATP formation. It consists of a core antenna complex that captures photons, and an electron transfer chain that converts photonic excitation into a charge separation.</text>
</comment>
<comment type="subunit">
    <text evidence="2">PSII is composed of 1 copy each of membrane proteins PsbA, PsbB, PsbC, PsbD, PsbE, PsbF, PsbH, PsbI, PsbJ, PsbK, PsbL, PsbM, PsbT, PsbX, PsbY, Psb30/Ycf12, peripheral proteins PsbO, CyanoQ (PsbQ), PsbU, PsbV and a large number of cofactors. It forms dimeric complexes.</text>
</comment>
<comment type="subcellular location">
    <subcellularLocation>
        <location evidence="1">Cellular thylakoid membrane</location>
        <topology evidence="1">Single-pass membrane protein</topology>
    </subcellularLocation>
</comment>
<comment type="similarity">
    <text evidence="1">Belongs to the PsbK family.</text>
</comment>
<dbReference type="EMBL" id="CP000551">
    <property type="protein sequence ID" value="ABM69582.1"/>
    <property type="molecule type" value="Genomic_DNA"/>
</dbReference>
<dbReference type="RefSeq" id="WP_011375837.1">
    <property type="nucleotide sequence ID" value="NC_008816.1"/>
</dbReference>
<dbReference type="SMR" id="A2BP71"/>
<dbReference type="STRING" id="146891.A9601_02941"/>
<dbReference type="KEGG" id="pmb:A9601_02941"/>
<dbReference type="HOGENOM" id="CLU_174355_0_0_3"/>
<dbReference type="Proteomes" id="UP000002590">
    <property type="component" value="Chromosome"/>
</dbReference>
<dbReference type="GO" id="GO:0009539">
    <property type="term" value="C:photosystem II reaction center"/>
    <property type="evidence" value="ECO:0007669"/>
    <property type="project" value="InterPro"/>
</dbReference>
<dbReference type="GO" id="GO:0031676">
    <property type="term" value="C:plasma membrane-derived thylakoid membrane"/>
    <property type="evidence" value="ECO:0007669"/>
    <property type="project" value="UniProtKB-SubCell"/>
</dbReference>
<dbReference type="GO" id="GO:0015979">
    <property type="term" value="P:photosynthesis"/>
    <property type="evidence" value="ECO:0007669"/>
    <property type="project" value="UniProtKB-UniRule"/>
</dbReference>
<dbReference type="HAMAP" id="MF_00441">
    <property type="entry name" value="PSII_PsbK"/>
    <property type="match status" value="1"/>
</dbReference>
<dbReference type="InterPro" id="IPR003687">
    <property type="entry name" value="PSII_PsbK"/>
</dbReference>
<dbReference type="InterPro" id="IPR037270">
    <property type="entry name" value="PSII_PsbK_sf"/>
</dbReference>
<dbReference type="NCBIfam" id="NF002715">
    <property type="entry name" value="PRK02553.1"/>
    <property type="match status" value="1"/>
</dbReference>
<dbReference type="PANTHER" id="PTHR35325">
    <property type="match status" value="1"/>
</dbReference>
<dbReference type="PANTHER" id="PTHR35325:SF1">
    <property type="entry name" value="PHOTOSYSTEM II REACTION CENTER PROTEIN K"/>
    <property type="match status" value="1"/>
</dbReference>
<dbReference type="Pfam" id="PF02533">
    <property type="entry name" value="PsbK"/>
    <property type="match status" value="1"/>
</dbReference>
<dbReference type="SUPFAM" id="SSF161037">
    <property type="entry name" value="Photosystem II reaction center protein K, PsbK"/>
    <property type="match status" value="1"/>
</dbReference>
<reference key="1">
    <citation type="journal article" date="2007" name="PLoS Genet.">
        <title>Patterns and implications of gene gain and loss in the evolution of Prochlorococcus.</title>
        <authorList>
            <person name="Kettler G.C."/>
            <person name="Martiny A.C."/>
            <person name="Huang K."/>
            <person name="Zucker J."/>
            <person name="Coleman M.L."/>
            <person name="Rodrigue S."/>
            <person name="Chen F."/>
            <person name="Lapidus A."/>
            <person name="Ferriera S."/>
            <person name="Johnson J."/>
            <person name="Steglich C."/>
            <person name="Church G.M."/>
            <person name="Richardson P."/>
            <person name="Chisholm S.W."/>
        </authorList>
    </citation>
    <scope>NUCLEOTIDE SEQUENCE [LARGE SCALE GENOMIC DNA]</scope>
    <source>
        <strain>AS9601</strain>
    </source>
</reference>
<accession>A2BP71</accession>
<organism>
    <name type="scientific">Prochlorococcus marinus (strain AS9601)</name>
    <dbReference type="NCBI Taxonomy" id="146891"/>
    <lineage>
        <taxon>Bacteria</taxon>
        <taxon>Bacillati</taxon>
        <taxon>Cyanobacteriota</taxon>
        <taxon>Cyanophyceae</taxon>
        <taxon>Synechococcales</taxon>
        <taxon>Prochlorococcaceae</taxon>
        <taxon>Prochlorococcus</taxon>
    </lineage>
</organism>
<name>PSBK_PROMS</name>
<proteinExistence type="inferred from homology"/>
<sequence length="46" mass="5249">MLILFNTFAELPEAYKAFAPTVDVLPLIPLFFFLLVFVWQAAVGFK</sequence>
<evidence type="ECO:0000255" key="1">
    <source>
        <dbReference type="HAMAP-Rule" id="MF_00441"/>
    </source>
</evidence>
<evidence type="ECO:0000305" key="2"/>
<feature type="propeptide" id="PRO_0000316074" evidence="1">
    <location>
        <begin position="1"/>
        <end position="9"/>
    </location>
</feature>
<feature type="chain" id="PRO_1000025982" description="Photosystem II reaction center protein K" evidence="1">
    <location>
        <begin position="10"/>
        <end position="46"/>
    </location>
</feature>
<feature type="transmembrane region" description="Helical" evidence="1">
    <location>
        <begin position="25"/>
        <end position="45"/>
    </location>
</feature>
<gene>
    <name evidence="1" type="primary">psbK</name>
    <name type="ordered locus">A9601_02941</name>
</gene>
<protein>
    <recommendedName>
        <fullName evidence="1">Photosystem II reaction center protein K</fullName>
        <shortName evidence="1">PSII-K</shortName>
    </recommendedName>
</protein>